<dbReference type="EC" id="2.7.2.11" evidence="1"/>
<dbReference type="EMBL" id="AF006720">
    <property type="protein sequence ID" value="AAB62698.1"/>
    <property type="molecule type" value="Genomic_DNA"/>
</dbReference>
<dbReference type="EMBL" id="AL009126">
    <property type="protein sequence ID" value="CAB13740.1"/>
    <property type="molecule type" value="Genomic_DNA"/>
</dbReference>
<dbReference type="PIR" id="F69682">
    <property type="entry name" value="F69682"/>
</dbReference>
<dbReference type="RefSeq" id="NP_389729.1">
    <property type="nucleotide sequence ID" value="NC_000964.3"/>
</dbReference>
<dbReference type="SMR" id="O07509"/>
<dbReference type="FunCoup" id="O07509">
    <property type="interactions" value="431"/>
</dbReference>
<dbReference type="STRING" id="224308.BSU18470"/>
<dbReference type="PaxDb" id="224308-BSU18470"/>
<dbReference type="EnsemblBacteria" id="CAB13740">
    <property type="protein sequence ID" value="CAB13740"/>
    <property type="gene ID" value="BSU_18470"/>
</dbReference>
<dbReference type="GeneID" id="940098"/>
<dbReference type="KEGG" id="bsu:BSU18470"/>
<dbReference type="PATRIC" id="fig|224308.179.peg.2014"/>
<dbReference type="eggNOG" id="COG0263">
    <property type="taxonomic scope" value="Bacteria"/>
</dbReference>
<dbReference type="InParanoid" id="O07509"/>
<dbReference type="OrthoDB" id="9804434at2"/>
<dbReference type="PhylomeDB" id="O07509"/>
<dbReference type="BioCyc" id="BSUB:BSU18470-MONOMER"/>
<dbReference type="UniPathway" id="UPA00098">
    <property type="reaction ID" value="UER00359"/>
</dbReference>
<dbReference type="Proteomes" id="UP000001570">
    <property type="component" value="Chromosome"/>
</dbReference>
<dbReference type="GO" id="GO:0005829">
    <property type="term" value="C:cytosol"/>
    <property type="evidence" value="ECO:0000318"/>
    <property type="project" value="GO_Central"/>
</dbReference>
<dbReference type="GO" id="GO:0005524">
    <property type="term" value="F:ATP binding"/>
    <property type="evidence" value="ECO:0007669"/>
    <property type="project" value="UniProtKB-KW"/>
</dbReference>
<dbReference type="GO" id="GO:0004349">
    <property type="term" value="F:glutamate 5-kinase activity"/>
    <property type="evidence" value="ECO:0000318"/>
    <property type="project" value="GO_Central"/>
</dbReference>
<dbReference type="GO" id="GO:0003723">
    <property type="term" value="F:RNA binding"/>
    <property type="evidence" value="ECO:0007669"/>
    <property type="project" value="InterPro"/>
</dbReference>
<dbReference type="GO" id="GO:0055129">
    <property type="term" value="P:L-proline biosynthetic process"/>
    <property type="evidence" value="ECO:0007669"/>
    <property type="project" value="UniProtKB-UniRule"/>
</dbReference>
<dbReference type="GO" id="GO:0006561">
    <property type="term" value="P:proline biosynthetic process"/>
    <property type="evidence" value="ECO:0000318"/>
    <property type="project" value="GO_Central"/>
</dbReference>
<dbReference type="CDD" id="cd04242">
    <property type="entry name" value="AAK_G5K_ProB"/>
    <property type="match status" value="1"/>
</dbReference>
<dbReference type="CDD" id="cd21157">
    <property type="entry name" value="PUA_G5K"/>
    <property type="match status" value="1"/>
</dbReference>
<dbReference type="FunFam" id="3.40.1160.10:FF:000018">
    <property type="entry name" value="Glutamate 5-kinase"/>
    <property type="match status" value="1"/>
</dbReference>
<dbReference type="Gene3D" id="3.40.1160.10">
    <property type="entry name" value="Acetylglutamate kinase-like"/>
    <property type="match status" value="1"/>
</dbReference>
<dbReference type="Gene3D" id="2.30.130.10">
    <property type="entry name" value="PUA domain"/>
    <property type="match status" value="1"/>
</dbReference>
<dbReference type="HAMAP" id="MF_00456">
    <property type="entry name" value="ProB"/>
    <property type="match status" value="1"/>
</dbReference>
<dbReference type="InterPro" id="IPR036393">
    <property type="entry name" value="AceGlu_kinase-like_sf"/>
</dbReference>
<dbReference type="InterPro" id="IPR001048">
    <property type="entry name" value="Asp/Glu/Uridylate_kinase"/>
</dbReference>
<dbReference type="InterPro" id="IPR041739">
    <property type="entry name" value="G5K_ProB"/>
</dbReference>
<dbReference type="InterPro" id="IPR001057">
    <property type="entry name" value="Glu/AcGlu_kinase"/>
</dbReference>
<dbReference type="InterPro" id="IPR011529">
    <property type="entry name" value="Glu_5kinase"/>
</dbReference>
<dbReference type="InterPro" id="IPR005715">
    <property type="entry name" value="Glu_5kinase/COase_Synthase"/>
</dbReference>
<dbReference type="InterPro" id="IPR019797">
    <property type="entry name" value="Glutamate_5-kinase_CS"/>
</dbReference>
<dbReference type="InterPro" id="IPR002478">
    <property type="entry name" value="PUA"/>
</dbReference>
<dbReference type="InterPro" id="IPR015947">
    <property type="entry name" value="PUA-like_sf"/>
</dbReference>
<dbReference type="InterPro" id="IPR036974">
    <property type="entry name" value="PUA_sf"/>
</dbReference>
<dbReference type="NCBIfam" id="TIGR01027">
    <property type="entry name" value="proB"/>
    <property type="match status" value="1"/>
</dbReference>
<dbReference type="PANTHER" id="PTHR43654">
    <property type="entry name" value="GLUTAMATE 5-KINASE"/>
    <property type="match status" value="1"/>
</dbReference>
<dbReference type="PANTHER" id="PTHR43654:SF1">
    <property type="entry name" value="ISOPENTENYL PHOSPHATE KINASE"/>
    <property type="match status" value="1"/>
</dbReference>
<dbReference type="Pfam" id="PF00696">
    <property type="entry name" value="AA_kinase"/>
    <property type="match status" value="1"/>
</dbReference>
<dbReference type="Pfam" id="PF01472">
    <property type="entry name" value="PUA"/>
    <property type="match status" value="1"/>
</dbReference>
<dbReference type="PIRSF" id="PIRSF000729">
    <property type="entry name" value="GK"/>
    <property type="match status" value="1"/>
</dbReference>
<dbReference type="PRINTS" id="PR00474">
    <property type="entry name" value="GLU5KINASE"/>
</dbReference>
<dbReference type="SMART" id="SM00359">
    <property type="entry name" value="PUA"/>
    <property type="match status" value="1"/>
</dbReference>
<dbReference type="SUPFAM" id="SSF53633">
    <property type="entry name" value="Carbamate kinase-like"/>
    <property type="match status" value="1"/>
</dbReference>
<dbReference type="SUPFAM" id="SSF88697">
    <property type="entry name" value="PUA domain-like"/>
    <property type="match status" value="1"/>
</dbReference>
<dbReference type="PROSITE" id="PS00902">
    <property type="entry name" value="GLUTAMATE_5_KINASE"/>
    <property type="match status" value="1"/>
</dbReference>
<dbReference type="PROSITE" id="PS50890">
    <property type="entry name" value="PUA"/>
    <property type="match status" value="1"/>
</dbReference>
<evidence type="ECO:0000255" key="1">
    <source>
        <dbReference type="HAMAP-Rule" id="MF_00456"/>
    </source>
</evidence>
<reference key="1">
    <citation type="submission" date="1997-06" db="EMBL/GenBank/DDBJ databases">
        <title>The salt-inducible proHJ operon involved in proline biosynthesis in Bacillus subtilis.</title>
        <authorList>
            <person name="Belitsky B.R."/>
            <person name="Sonenshein A.L."/>
        </authorList>
    </citation>
    <scope>NUCLEOTIDE SEQUENCE [GENOMIC DNA]</scope>
    <source>
        <strain>168 / SMY</strain>
    </source>
</reference>
<reference key="2">
    <citation type="journal article" date="1997" name="Nature">
        <title>The complete genome sequence of the Gram-positive bacterium Bacillus subtilis.</title>
        <authorList>
            <person name="Kunst F."/>
            <person name="Ogasawara N."/>
            <person name="Moszer I."/>
            <person name="Albertini A.M."/>
            <person name="Alloni G."/>
            <person name="Azevedo V."/>
            <person name="Bertero M.G."/>
            <person name="Bessieres P."/>
            <person name="Bolotin A."/>
            <person name="Borchert S."/>
            <person name="Borriss R."/>
            <person name="Boursier L."/>
            <person name="Brans A."/>
            <person name="Braun M."/>
            <person name="Brignell S.C."/>
            <person name="Bron S."/>
            <person name="Brouillet S."/>
            <person name="Bruschi C.V."/>
            <person name="Caldwell B."/>
            <person name="Capuano V."/>
            <person name="Carter N.M."/>
            <person name="Choi S.-K."/>
            <person name="Codani J.-J."/>
            <person name="Connerton I.F."/>
            <person name="Cummings N.J."/>
            <person name="Daniel R.A."/>
            <person name="Denizot F."/>
            <person name="Devine K.M."/>
            <person name="Duesterhoeft A."/>
            <person name="Ehrlich S.D."/>
            <person name="Emmerson P.T."/>
            <person name="Entian K.-D."/>
            <person name="Errington J."/>
            <person name="Fabret C."/>
            <person name="Ferrari E."/>
            <person name="Foulger D."/>
            <person name="Fritz C."/>
            <person name="Fujita M."/>
            <person name="Fujita Y."/>
            <person name="Fuma S."/>
            <person name="Galizzi A."/>
            <person name="Galleron N."/>
            <person name="Ghim S.-Y."/>
            <person name="Glaser P."/>
            <person name="Goffeau A."/>
            <person name="Golightly E.J."/>
            <person name="Grandi G."/>
            <person name="Guiseppi G."/>
            <person name="Guy B.J."/>
            <person name="Haga K."/>
            <person name="Haiech J."/>
            <person name="Harwood C.R."/>
            <person name="Henaut A."/>
            <person name="Hilbert H."/>
            <person name="Holsappel S."/>
            <person name="Hosono S."/>
            <person name="Hullo M.-F."/>
            <person name="Itaya M."/>
            <person name="Jones L.-M."/>
            <person name="Joris B."/>
            <person name="Karamata D."/>
            <person name="Kasahara Y."/>
            <person name="Klaerr-Blanchard M."/>
            <person name="Klein C."/>
            <person name="Kobayashi Y."/>
            <person name="Koetter P."/>
            <person name="Koningstein G."/>
            <person name="Krogh S."/>
            <person name="Kumano M."/>
            <person name="Kurita K."/>
            <person name="Lapidus A."/>
            <person name="Lardinois S."/>
            <person name="Lauber J."/>
            <person name="Lazarevic V."/>
            <person name="Lee S.-M."/>
            <person name="Levine A."/>
            <person name="Liu H."/>
            <person name="Masuda S."/>
            <person name="Mauel C."/>
            <person name="Medigue C."/>
            <person name="Medina N."/>
            <person name="Mellado R.P."/>
            <person name="Mizuno M."/>
            <person name="Moestl D."/>
            <person name="Nakai S."/>
            <person name="Noback M."/>
            <person name="Noone D."/>
            <person name="O'Reilly M."/>
            <person name="Ogawa K."/>
            <person name="Ogiwara A."/>
            <person name="Oudega B."/>
            <person name="Park S.-H."/>
            <person name="Parro V."/>
            <person name="Pohl T.M."/>
            <person name="Portetelle D."/>
            <person name="Porwollik S."/>
            <person name="Prescott A.M."/>
            <person name="Presecan E."/>
            <person name="Pujic P."/>
            <person name="Purnelle B."/>
            <person name="Rapoport G."/>
            <person name="Rey M."/>
            <person name="Reynolds S."/>
            <person name="Rieger M."/>
            <person name="Rivolta C."/>
            <person name="Rocha E."/>
            <person name="Roche B."/>
            <person name="Rose M."/>
            <person name="Sadaie Y."/>
            <person name="Sato T."/>
            <person name="Scanlan E."/>
            <person name="Schleich S."/>
            <person name="Schroeter R."/>
            <person name="Scoffone F."/>
            <person name="Sekiguchi J."/>
            <person name="Sekowska A."/>
            <person name="Seror S.J."/>
            <person name="Serror P."/>
            <person name="Shin B.-S."/>
            <person name="Soldo B."/>
            <person name="Sorokin A."/>
            <person name="Tacconi E."/>
            <person name="Takagi T."/>
            <person name="Takahashi H."/>
            <person name="Takemaru K."/>
            <person name="Takeuchi M."/>
            <person name="Tamakoshi A."/>
            <person name="Tanaka T."/>
            <person name="Terpstra P."/>
            <person name="Tognoni A."/>
            <person name="Tosato V."/>
            <person name="Uchiyama S."/>
            <person name="Vandenbol M."/>
            <person name="Vannier F."/>
            <person name="Vassarotti A."/>
            <person name="Viari A."/>
            <person name="Wambutt R."/>
            <person name="Wedler E."/>
            <person name="Wedler H."/>
            <person name="Weitzenegger T."/>
            <person name="Winters P."/>
            <person name="Wipat A."/>
            <person name="Yamamoto H."/>
            <person name="Yamane K."/>
            <person name="Yasumoto K."/>
            <person name="Yata K."/>
            <person name="Yoshida K."/>
            <person name="Yoshikawa H.-F."/>
            <person name="Zumstein E."/>
            <person name="Yoshikawa H."/>
            <person name="Danchin A."/>
        </authorList>
    </citation>
    <scope>NUCLEOTIDE SEQUENCE [LARGE SCALE GENOMIC DNA]</scope>
    <source>
        <strain>168</strain>
    </source>
</reference>
<sequence length="371" mass="40354">MTPDTSMKRVVVKIGSSSLTSLHGEISIRKLEALVDQVVKLKDAGYEVILVSSGAVAAGYRKLGFIQRPEKLPEKQASASIGQGLLMEAYSKLFLAHGYVASQILITRSDFSDEYRYNNVRNTMNVLLERGIIPIINENDTVTVNRLKFGDNDTLAAKVAGLIDADMLVILSDIDGLYDGNPRTNPEAKKIQRVSEITPDIEACAGDTGSIVGTGGMRSKLDAFKIVMASGIKGFLGQADAGDILYHAVHEQAEGTYFEAEGTLPLNQKEQWIAFNSGPEGEMILSDDCSRKITNGQSSLYLDGVQKIKGKFKSGSVVRLMDSKGTEIGLGIVNYSSVQLQEPEKKKELTNRALIDQEAFVCHVDFSLPVN</sequence>
<organism>
    <name type="scientific">Bacillus subtilis (strain 168)</name>
    <dbReference type="NCBI Taxonomy" id="224308"/>
    <lineage>
        <taxon>Bacteria</taxon>
        <taxon>Bacillati</taxon>
        <taxon>Bacillota</taxon>
        <taxon>Bacilli</taxon>
        <taxon>Bacillales</taxon>
        <taxon>Bacillaceae</taxon>
        <taxon>Bacillus</taxon>
    </lineage>
</organism>
<comment type="function">
    <text evidence="1">Catalyzes the transfer of a phosphate group to glutamate to form L-glutamate 5-phosphate.</text>
</comment>
<comment type="catalytic activity">
    <reaction evidence="1">
        <text>L-glutamate + ATP = L-glutamyl 5-phosphate + ADP</text>
        <dbReference type="Rhea" id="RHEA:14877"/>
        <dbReference type="ChEBI" id="CHEBI:29985"/>
        <dbReference type="ChEBI" id="CHEBI:30616"/>
        <dbReference type="ChEBI" id="CHEBI:58274"/>
        <dbReference type="ChEBI" id="CHEBI:456216"/>
        <dbReference type="EC" id="2.7.2.11"/>
    </reaction>
</comment>
<comment type="pathway">
    <text evidence="1">Amino-acid biosynthesis; L-proline biosynthesis; L-glutamate 5-semialdehyde from L-glutamate: step 1/2.</text>
</comment>
<comment type="subcellular location">
    <subcellularLocation>
        <location evidence="1">Cytoplasm</location>
    </subcellularLocation>
</comment>
<comment type="similarity">
    <text evidence="1">Belongs to the glutamate 5-kinase family.</text>
</comment>
<protein>
    <recommendedName>
        <fullName evidence="1">Glutamate 5-kinase 2</fullName>
        <ecNumber evidence="1">2.7.2.11</ecNumber>
    </recommendedName>
    <alternativeName>
        <fullName evidence="1">Gamma-glutamyl kinase 2</fullName>
        <shortName evidence="1">GK 2</shortName>
    </alternativeName>
</protein>
<proteinExistence type="inferred from homology"/>
<name>PROJ_BACSU</name>
<keyword id="KW-0028">Amino-acid biosynthesis</keyword>
<keyword id="KW-0067">ATP-binding</keyword>
<keyword id="KW-0963">Cytoplasm</keyword>
<keyword id="KW-0418">Kinase</keyword>
<keyword id="KW-0547">Nucleotide-binding</keyword>
<keyword id="KW-0641">Proline biosynthesis</keyword>
<keyword id="KW-1185">Reference proteome</keyword>
<keyword id="KW-0808">Transferase</keyword>
<gene>
    <name type="primary">proJ</name>
    <name type="synonym">yohA</name>
    <name type="ordered locus">BSU18470</name>
</gene>
<accession>O07509</accession>
<feature type="chain" id="PRO_0000109642" description="Glutamate 5-kinase 2">
    <location>
        <begin position="1"/>
        <end position="371"/>
    </location>
</feature>
<feature type="domain" description="PUA" evidence="1">
    <location>
        <begin position="280"/>
        <end position="356"/>
    </location>
</feature>
<feature type="binding site" evidence="1">
    <location>
        <position position="13"/>
    </location>
    <ligand>
        <name>ATP</name>
        <dbReference type="ChEBI" id="CHEBI:30616"/>
    </ligand>
</feature>
<feature type="binding site" evidence="1">
    <location>
        <position position="53"/>
    </location>
    <ligand>
        <name>substrate</name>
    </ligand>
</feature>
<feature type="binding site" evidence="1">
    <location>
        <position position="140"/>
    </location>
    <ligand>
        <name>substrate</name>
    </ligand>
</feature>
<feature type="binding site" evidence="1">
    <location>
        <position position="152"/>
    </location>
    <ligand>
        <name>substrate</name>
    </ligand>
</feature>
<feature type="binding site" evidence="1">
    <location>
        <begin position="172"/>
        <end position="173"/>
    </location>
    <ligand>
        <name>ATP</name>
        <dbReference type="ChEBI" id="CHEBI:30616"/>
    </ligand>
</feature>
<feature type="binding site" evidence="1">
    <location>
        <begin position="214"/>
        <end position="220"/>
    </location>
    <ligand>
        <name>ATP</name>
        <dbReference type="ChEBI" id="CHEBI:30616"/>
    </ligand>
</feature>